<comment type="function">
    <text>May be involved in transcriptional regulation.</text>
</comment>
<comment type="subcellular location">
    <subcellularLocation>
        <location evidence="8">Nucleus</location>
    </subcellularLocation>
</comment>
<comment type="alternative products">
    <event type="alternative splicing"/>
    <isoform>
        <id>Q9NV72-1</id>
        <name>1</name>
        <sequence type="displayed"/>
    </isoform>
    <isoform>
        <id>Q9NV72-2</id>
        <name>2</name>
        <sequence type="described" ref="VSP_055969"/>
    </isoform>
</comment>
<comment type="similarity">
    <text evidence="8">Belongs to the krueppel C2H2-type zinc-finger protein family.</text>
</comment>
<dbReference type="EMBL" id="AK001753">
    <property type="protein sequence ID" value="BAA91884.1"/>
    <property type="molecule type" value="mRNA"/>
</dbReference>
<dbReference type="EMBL" id="AC022150">
    <property type="status" value="NOT_ANNOTATED_CDS"/>
    <property type="molecule type" value="Genomic_DNA"/>
</dbReference>
<dbReference type="EMBL" id="BC080612">
    <property type="protein sequence ID" value="AAH80612.2"/>
    <property type="molecule type" value="mRNA"/>
</dbReference>
<dbReference type="EMBL" id="BC131719">
    <property type="protein sequence ID" value="AAI31720.1"/>
    <property type="molecule type" value="mRNA"/>
</dbReference>
<dbReference type="EMBL" id="BC136425">
    <property type="protein sequence ID" value="AAI36426.1"/>
    <property type="molecule type" value="mRNA"/>
</dbReference>
<dbReference type="EMBL" id="BC136426">
    <property type="protein sequence ID" value="AAI36427.1"/>
    <property type="molecule type" value="mRNA"/>
</dbReference>
<dbReference type="CCDS" id="CCDS33092.1">
    <molecule id="Q9NV72-2"/>
</dbReference>
<dbReference type="CCDS" id="CCDS54311.1">
    <molecule id="Q9NV72-1"/>
</dbReference>
<dbReference type="RefSeq" id="NP_001166126.1">
    <molecule id="Q9NV72-1"/>
    <property type="nucleotide sequence ID" value="NM_001172655.1"/>
</dbReference>
<dbReference type="RefSeq" id="NP_001420610.1">
    <molecule id="Q9NV72-1"/>
    <property type="nucleotide sequence ID" value="NM_001433681.1"/>
</dbReference>
<dbReference type="RefSeq" id="NP_001420611.1">
    <molecule id="Q9NV72-1"/>
    <property type="nucleotide sequence ID" value="NM_001433682.1"/>
</dbReference>
<dbReference type="RefSeq" id="NP_001420612.1">
    <molecule id="Q9NV72-2"/>
    <property type="nucleotide sequence ID" value="NM_001433683.1"/>
</dbReference>
<dbReference type="RefSeq" id="NP_001420613.1">
    <molecule id="Q9NV72-2"/>
    <property type="nucleotide sequence ID" value="NM_001433684.1"/>
</dbReference>
<dbReference type="RefSeq" id="NP_001420614.1">
    <molecule id="Q9NV72-2"/>
    <property type="nucleotide sequence ID" value="NM_001433685.1"/>
</dbReference>
<dbReference type="RefSeq" id="NP_060730.2">
    <molecule id="Q9NV72-2"/>
    <property type="nucleotide sequence ID" value="NM_018260.3"/>
</dbReference>
<dbReference type="RefSeq" id="XP_011525394.1">
    <property type="nucleotide sequence ID" value="XM_011527092.1"/>
</dbReference>
<dbReference type="RefSeq" id="XP_047295027.1">
    <molecule id="Q9NV72-1"/>
    <property type="nucleotide sequence ID" value="XM_047439071.1"/>
</dbReference>
<dbReference type="RefSeq" id="XP_047295028.1">
    <molecule id="Q9NV72-1"/>
    <property type="nucleotide sequence ID" value="XM_047439072.1"/>
</dbReference>
<dbReference type="RefSeq" id="XP_047295029.1">
    <molecule id="Q9NV72-1"/>
    <property type="nucleotide sequence ID" value="XM_047439073.1"/>
</dbReference>
<dbReference type="RefSeq" id="XP_047295030.1">
    <molecule id="Q9NV72-1"/>
    <property type="nucleotide sequence ID" value="XM_047439074.1"/>
</dbReference>
<dbReference type="RefSeq" id="XP_047295031.1">
    <molecule id="Q9NV72-2"/>
    <property type="nucleotide sequence ID" value="XM_047439075.1"/>
</dbReference>
<dbReference type="RefSeq" id="XP_047295032.1">
    <molecule id="Q9NV72-2"/>
    <property type="nucleotide sequence ID" value="XM_047439076.1"/>
</dbReference>
<dbReference type="RefSeq" id="XP_047295033.1">
    <molecule id="Q9NV72-2"/>
    <property type="nucleotide sequence ID" value="XM_047439077.1"/>
</dbReference>
<dbReference type="SMR" id="Q9NV72"/>
<dbReference type="BioGRID" id="120880">
    <property type="interactions" value="8"/>
</dbReference>
<dbReference type="FunCoup" id="Q9NV72">
    <property type="interactions" value="104"/>
</dbReference>
<dbReference type="IntAct" id="Q9NV72">
    <property type="interactions" value="5"/>
</dbReference>
<dbReference type="STRING" id="9606.ENSP00000444339"/>
<dbReference type="iPTMnet" id="Q9NV72"/>
<dbReference type="PhosphoSitePlus" id="Q9NV72"/>
<dbReference type="BioMuta" id="ZNF701"/>
<dbReference type="DMDM" id="296453055"/>
<dbReference type="jPOST" id="Q9NV72"/>
<dbReference type="MassIVE" id="Q9NV72"/>
<dbReference type="PaxDb" id="9606-ENSP00000444339"/>
<dbReference type="PeptideAtlas" id="Q9NV72"/>
<dbReference type="ProteomicsDB" id="25076"/>
<dbReference type="ProteomicsDB" id="82756">
    <molecule id="Q9NV72-1"/>
</dbReference>
<dbReference type="TopDownProteomics" id="Q9NV72-2">
    <molecule id="Q9NV72-2"/>
</dbReference>
<dbReference type="Antibodypedia" id="818">
    <property type="antibodies" value="92 antibodies from 17 providers"/>
</dbReference>
<dbReference type="DNASU" id="55762"/>
<dbReference type="Ensembl" id="ENST00000301093.6">
    <molecule id="Q9NV72-1"/>
    <property type="protein sequence ID" value="ENSP00000301093.2"/>
    <property type="gene ID" value="ENSG00000167562.14"/>
</dbReference>
<dbReference type="Ensembl" id="ENST00000391785.8">
    <molecule id="Q9NV72-2"/>
    <property type="protein sequence ID" value="ENSP00000375662.2"/>
    <property type="gene ID" value="ENSG00000167562.14"/>
</dbReference>
<dbReference type="Ensembl" id="ENST00000540331.1">
    <molecule id="Q9NV72-1"/>
    <property type="protein sequence ID" value="ENSP00000444339.1"/>
    <property type="gene ID" value="ENSG00000167562.14"/>
</dbReference>
<dbReference type="GeneID" id="55762"/>
<dbReference type="KEGG" id="hsa:55762"/>
<dbReference type="MANE-Select" id="ENST00000391785.8">
    <molecule id="Q9NV72-2"/>
    <property type="protein sequence ID" value="ENSP00000375662.2"/>
    <property type="RefSeq nucleotide sequence ID" value="NM_018260.3"/>
    <property type="RefSeq protein sequence ID" value="NP_060730.2"/>
</dbReference>
<dbReference type="UCSC" id="uc002pzs.3">
    <molecule id="Q9NV72-1"/>
    <property type="organism name" value="human"/>
</dbReference>
<dbReference type="AGR" id="HGNC:25597"/>
<dbReference type="CTD" id="55762"/>
<dbReference type="DisGeNET" id="55762"/>
<dbReference type="GeneCards" id="ZNF701"/>
<dbReference type="HGNC" id="HGNC:25597">
    <property type="gene designation" value="ZNF701"/>
</dbReference>
<dbReference type="HPA" id="ENSG00000167562">
    <property type="expression patterns" value="Low tissue specificity"/>
</dbReference>
<dbReference type="neXtProt" id="NX_Q9NV72"/>
<dbReference type="OpenTargets" id="ENSG00000167562"/>
<dbReference type="PharmGKB" id="PA142670498"/>
<dbReference type="VEuPathDB" id="HostDB:ENSG00000167562"/>
<dbReference type="eggNOG" id="KOG1721">
    <property type="taxonomic scope" value="Eukaryota"/>
</dbReference>
<dbReference type="GeneTree" id="ENSGT00940000154397"/>
<dbReference type="HOGENOM" id="CLU_002678_0_9_1"/>
<dbReference type="InParanoid" id="Q9NV72"/>
<dbReference type="OrthoDB" id="4748970at2759"/>
<dbReference type="PAN-GO" id="Q9NV72">
    <property type="GO annotations" value="4 GO annotations based on evolutionary models"/>
</dbReference>
<dbReference type="PhylomeDB" id="Q9NV72"/>
<dbReference type="TreeFam" id="TF341892"/>
<dbReference type="PathwayCommons" id="Q9NV72"/>
<dbReference type="Reactome" id="R-HSA-212436">
    <property type="pathway name" value="Generic Transcription Pathway"/>
</dbReference>
<dbReference type="SignaLink" id="Q9NV72"/>
<dbReference type="BioGRID-ORCS" id="55762">
    <property type="hits" value="11 hits in 1135 CRISPR screens"/>
</dbReference>
<dbReference type="ChiTaRS" id="ZNF701">
    <property type="organism name" value="human"/>
</dbReference>
<dbReference type="GenomeRNAi" id="55762"/>
<dbReference type="Pharos" id="Q9NV72">
    <property type="development level" value="Tdark"/>
</dbReference>
<dbReference type="PRO" id="PR:Q9NV72"/>
<dbReference type="Proteomes" id="UP000005640">
    <property type="component" value="Chromosome 19"/>
</dbReference>
<dbReference type="RNAct" id="Q9NV72">
    <property type="molecule type" value="protein"/>
</dbReference>
<dbReference type="Bgee" id="ENSG00000167562">
    <property type="expression patterns" value="Expressed in buccal mucosa cell and 125 other cell types or tissues"/>
</dbReference>
<dbReference type="ExpressionAtlas" id="Q9NV72">
    <property type="expression patterns" value="baseline and differential"/>
</dbReference>
<dbReference type="GO" id="GO:0005634">
    <property type="term" value="C:nucleus"/>
    <property type="evidence" value="ECO:0000318"/>
    <property type="project" value="GO_Central"/>
</dbReference>
<dbReference type="GO" id="GO:0000981">
    <property type="term" value="F:DNA-binding transcription factor activity, RNA polymerase II-specific"/>
    <property type="evidence" value="ECO:0000318"/>
    <property type="project" value="GO_Central"/>
</dbReference>
<dbReference type="GO" id="GO:0000978">
    <property type="term" value="F:RNA polymerase II cis-regulatory region sequence-specific DNA binding"/>
    <property type="evidence" value="ECO:0000318"/>
    <property type="project" value="GO_Central"/>
</dbReference>
<dbReference type="GO" id="GO:0008270">
    <property type="term" value="F:zinc ion binding"/>
    <property type="evidence" value="ECO:0007669"/>
    <property type="project" value="UniProtKB-KW"/>
</dbReference>
<dbReference type="GO" id="GO:0006357">
    <property type="term" value="P:regulation of transcription by RNA polymerase II"/>
    <property type="evidence" value="ECO:0000318"/>
    <property type="project" value="GO_Central"/>
</dbReference>
<dbReference type="CDD" id="cd07765">
    <property type="entry name" value="KRAB_A-box"/>
    <property type="match status" value="1"/>
</dbReference>
<dbReference type="FunFam" id="3.30.160.60:FF:004137">
    <property type="match status" value="1"/>
</dbReference>
<dbReference type="FunFam" id="3.30.160.60:FF:000295">
    <property type="entry name" value="zinc finger protein 19"/>
    <property type="match status" value="1"/>
</dbReference>
<dbReference type="FunFam" id="3.30.160.60:FF:000992">
    <property type="entry name" value="Zinc finger protein 320"/>
    <property type="match status" value="1"/>
</dbReference>
<dbReference type="FunFam" id="3.30.160.60:FF:002402">
    <property type="entry name" value="Zinc finger protein 347"/>
    <property type="match status" value="1"/>
</dbReference>
<dbReference type="FunFam" id="3.30.160.60:FF:000016">
    <property type="entry name" value="zinc finger protein 37 homolog"/>
    <property type="match status" value="1"/>
</dbReference>
<dbReference type="FunFam" id="3.30.160.60:FF:002090">
    <property type="entry name" value="Zinc finger protein 473"/>
    <property type="match status" value="1"/>
</dbReference>
<dbReference type="FunFam" id="3.30.160.60:FF:000149">
    <property type="entry name" value="Zinc finger protein 569"/>
    <property type="match status" value="1"/>
</dbReference>
<dbReference type="FunFam" id="3.30.160.60:FF:002289">
    <property type="entry name" value="Zinc finger protein 813"/>
    <property type="match status" value="1"/>
</dbReference>
<dbReference type="FunFam" id="3.30.160.60:FF:000416">
    <property type="entry name" value="zinc finger protein 879 isoform X1"/>
    <property type="match status" value="1"/>
</dbReference>
<dbReference type="Gene3D" id="6.10.140.140">
    <property type="match status" value="1"/>
</dbReference>
<dbReference type="Gene3D" id="3.30.160.60">
    <property type="entry name" value="Classic Zinc Finger"/>
    <property type="match status" value="9"/>
</dbReference>
<dbReference type="InterPro" id="IPR001909">
    <property type="entry name" value="KRAB"/>
</dbReference>
<dbReference type="InterPro" id="IPR036051">
    <property type="entry name" value="KRAB_dom_sf"/>
</dbReference>
<dbReference type="InterPro" id="IPR036236">
    <property type="entry name" value="Znf_C2H2_sf"/>
</dbReference>
<dbReference type="InterPro" id="IPR013087">
    <property type="entry name" value="Znf_C2H2_type"/>
</dbReference>
<dbReference type="PANTHER" id="PTHR24381">
    <property type="entry name" value="ZINC FINGER PROTEIN"/>
    <property type="match status" value="1"/>
</dbReference>
<dbReference type="PANTHER" id="PTHR24381:SF366">
    <property type="entry name" value="ZINC FINGER PROTEIN 383"/>
    <property type="match status" value="1"/>
</dbReference>
<dbReference type="Pfam" id="PF01352">
    <property type="entry name" value="KRAB"/>
    <property type="match status" value="1"/>
</dbReference>
<dbReference type="Pfam" id="PF00096">
    <property type="entry name" value="zf-C2H2"/>
    <property type="match status" value="7"/>
</dbReference>
<dbReference type="PRINTS" id="PR02045">
    <property type="entry name" value="F138DOMAIN"/>
</dbReference>
<dbReference type="SMART" id="SM00349">
    <property type="entry name" value="KRAB"/>
    <property type="match status" value="1"/>
</dbReference>
<dbReference type="SMART" id="SM00355">
    <property type="entry name" value="ZnF_C2H2"/>
    <property type="match status" value="8"/>
</dbReference>
<dbReference type="SUPFAM" id="SSF57667">
    <property type="entry name" value="beta-beta-alpha zinc fingers"/>
    <property type="match status" value="5"/>
</dbReference>
<dbReference type="SUPFAM" id="SSF109640">
    <property type="entry name" value="KRAB domain (Kruppel-associated box)"/>
    <property type="match status" value="1"/>
</dbReference>
<dbReference type="PROSITE" id="PS50805">
    <property type="entry name" value="KRAB"/>
    <property type="match status" value="1"/>
</dbReference>
<dbReference type="PROSITE" id="PS00028">
    <property type="entry name" value="ZINC_FINGER_C2H2_1"/>
    <property type="match status" value="7"/>
</dbReference>
<dbReference type="PROSITE" id="PS50157">
    <property type="entry name" value="ZINC_FINGER_C2H2_2"/>
    <property type="match status" value="9"/>
</dbReference>
<gene>
    <name type="primary">ZNF701</name>
</gene>
<proteinExistence type="evidence at protein level"/>
<feature type="chain" id="PRO_0000233281" description="Zinc finger protein 701">
    <location>
        <begin position="1"/>
        <end position="531"/>
    </location>
</feature>
<feature type="domain" description="KRAB" evidence="2">
    <location>
        <begin position="74"/>
        <end position="146"/>
    </location>
</feature>
<feature type="zinc finger region" description="C2H2-type 1; degenerate" evidence="1">
    <location>
        <begin position="281"/>
        <end position="303"/>
    </location>
</feature>
<feature type="zinc finger region" description="C2H2-type 2" evidence="1">
    <location>
        <begin position="309"/>
        <end position="330"/>
    </location>
</feature>
<feature type="zinc finger region" description="C2H2-type 3" evidence="1">
    <location>
        <begin position="336"/>
        <end position="358"/>
    </location>
</feature>
<feature type="zinc finger region" description="C2H2-type 4" evidence="1">
    <location>
        <begin position="364"/>
        <end position="386"/>
    </location>
</feature>
<feature type="zinc finger region" description="C2H2-type 5" evidence="1">
    <location>
        <begin position="392"/>
        <end position="414"/>
    </location>
</feature>
<feature type="zinc finger region" description="C2H2-type 6" evidence="1">
    <location>
        <begin position="420"/>
        <end position="442"/>
    </location>
</feature>
<feature type="zinc finger region" description="C2H2-type 7" evidence="1">
    <location>
        <begin position="448"/>
        <end position="470"/>
    </location>
</feature>
<feature type="zinc finger region" description="C2H2-type 8" evidence="1">
    <location>
        <begin position="476"/>
        <end position="498"/>
    </location>
</feature>
<feature type="zinc finger region" description="C2H2-type 9" evidence="1">
    <location>
        <begin position="504"/>
        <end position="526"/>
    </location>
</feature>
<feature type="region of interest" description="Disordered" evidence="3">
    <location>
        <begin position="1"/>
        <end position="42"/>
    </location>
</feature>
<feature type="compositionally biased region" description="Polar residues" evidence="3">
    <location>
        <begin position="22"/>
        <end position="36"/>
    </location>
</feature>
<feature type="cross-link" description="Glycyl lysine isopeptide (Lys-Gly) (interchain with G-Cter in SUMO2)" evidence="9">
    <location>
        <position position="271"/>
    </location>
</feature>
<feature type="splice variant" id="VSP_055969" description="In isoform 2." evidence="6 7">
    <location>
        <begin position="1"/>
        <end position="66"/>
    </location>
</feature>
<feature type="sequence variant" id="VAR_033592" description="In dbSNP:rs162832." evidence="4 5">
    <original>L</original>
    <variation>P</variation>
    <location>
        <position position="70"/>
    </location>
</feature>
<feature type="sequence variant" id="VAR_033593" description="In dbSNP:rs366793." evidence="4 5">
    <original>T</original>
    <variation>I</variation>
    <location>
        <position position="182"/>
    </location>
</feature>
<feature type="sequence variant" id="VAR_060432" description="In dbSNP:rs12462687.">
    <original>L</original>
    <variation>V</variation>
    <location>
        <position position="185"/>
    </location>
</feature>
<feature type="sequence variant" id="VAR_061964" description="In dbSNP:rs427127.">
    <original>D</original>
    <variation>E</variation>
    <location>
        <position position="306"/>
    </location>
</feature>
<feature type="sequence variant" id="VAR_052898" description="In dbSNP:rs373554." evidence="4 5">
    <original>T</original>
    <variation>K</variation>
    <location>
        <position position="337"/>
    </location>
</feature>
<feature type="sequence variant" id="VAR_060433" description="In dbSNP:rs3745102." evidence="4">
    <original>R</original>
    <variation>H</variation>
    <location>
        <position position="495"/>
    </location>
</feature>
<feature type="sequence variant" id="VAR_033594" description="In dbSNP:rs444172.">
    <original>R</original>
    <variation>C</variation>
    <location>
        <position position="521"/>
    </location>
</feature>
<organism>
    <name type="scientific">Homo sapiens</name>
    <name type="common">Human</name>
    <dbReference type="NCBI Taxonomy" id="9606"/>
    <lineage>
        <taxon>Eukaryota</taxon>
        <taxon>Metazoa</taxon>
        <taxon>Chordata</taxon>
        <taxon>Craniata</taxon>
        <taxon>Vertebrata</taxon>
        <taxon>Euteleostomi</taxon>
        <taxon>Mammalia</taxon>
        <taxon>Eutheria</taxon>
        <taxon>Euarchontoglires</taxon>
        <taxon>Primates</taxon>
        <taxon>Haplorrhini</taxon>
        <taxon>Catarrhini</taxon>
        <taxon>Hominidae</taxon>
        <taxon>Homo</taxon>
    </lineage>
</organism>
<protein>
    <recommendedName>
        <fullName>Zinc finger protein 701</fullName>
    </recommendedName>
</protein>
<keyword id="KW-0025">Alternative splicing</keyword>
<keyword id="KW-0238">DNA-binding</keyword>
<keyword id="KW-1017">Isopeptide bond</keyword>
<keyword id="KW-0479">Metal-binding</keyword>
<keyword id="KW-0539">Nucleus</keyword>
<keyword id="KW-1267">Proteomics identification</keyword>
<keyword id="KW-1185">Reference proteome</keyword>
<keyword id="KW-0677">Repeat</keyword>
<keyword id="KW-0804">Transcription</keyword>
<keyword id="KW-0805">Transcription regulation</keyword>
<keyword id="KW-0832">Ubl conjugation</keyword>
<keyword id="KW-0862">Zinc</keyword>
<keyword id="KW-0863">Zinc-finger</keyword>
<sequence length="531" mass="60903">MGFLHVGQDGLELPTSGDPPASASQSAGITGVSHRTQPPCFEGLTSKDLVREEKTRKRKRKAKESGMALLQGLLTFRDVAIEFSQEEWKCLDPAQRTLYRDVMLENYRNLVSLDTSSKCMMKMFSSTGQGNTEVVHTGTLQIHASHHIGDTCFQEIEKDIHDFVFQWQENETNGHEALMTKTKKLMSSTERHDQRHAGNKPIKNELGSSFHSHLPEVHIFHPEGKIGNQVEKAINDAFSVSASQRISCRPKTRISNKYRNNFLQSSLLTQKREVHTREKSFQRNESGKAFNGSSLLKKHQIIHLGDKQYKCDVCGKDFHQKRYLACHRCHTGENPYTCNECGKTFSHNSALLVHKAIHTGEKPYKCNECGKVFNQQSNLARHHRVHTGEKPYKCEECDKVFSRKSHLERHRRIHTGEKPYKCKVCDKAFRRDSHLAQHTVIHTGEKPYKCNECGKTFVQNSSLVMHKVIHTGEKRYKCNECGKVFNHKSNLACHRRLHTGEKPYKCNECGKVFNRKSNLERHHRLHTGKKS</sequence>
<accession>Q9NV72</accession>
<accession>A2RRM8</accession>
<accession>B9EGF2</accession>
<accession>F5GZM6</accession>
<accession>Q66K42</accession>
<evidence type="ECO:0000255" key="1">
    <source>
        <dbReference type="PROSITE-ProRule" id="PRU00042"/>
    </source>
</evidence>
<evidence type="ECO:0000255" key="2">
    <source>
        <dbReference type="PROSITE-ProRule" id="PRU00119"/>
    </source>
</evidence>
<evidence type="ECO:0000256" key="3">
    <source>
        <dbReference type="SAM" id="MobiDB-lite"/>
    </source>
</evidence>
<evidence type="ECO:0000269" key="4">
    <source>
    </source>
</evidence>
<evidence type="ECO:0000269" key="5">
    <source>
    </source>
</evidence>
<evidence type="ECO:0000303" key="6">
    <source>
    </source>
</evidence>
<evidence type="ECO:0000303" key="7">
    <source>
    </source>
</evidence>
<evidence type="ECO:0000305" key="8"/>
<evidence type="ECO:0007744" key="9">
    <source>
    </source>
</evidence>
<reference key="1">
    <citation type="journal article" date="2004" name="Nat. Genet.">
        <title>Complete sequencing and characterization of 21,243 full-length human cDNAs.</title>
        <authorList>
            <person name="Ota T."/>
            <person name="Suzuki Y."/>
            <person name="Nishikawa T."/>
            <person name="Otsuki T."/>
            <person name="Sugiyama T."/>
            <person name="Irie R."/>
            <person name="Wakamatsu A."/>
            <person name="Hayashi K."/>
            <person name="Sato H."/>
            <person name="Nagai K."/>
            <person name="Kimura K."/>
            <person name="Makita H."/>
            <person name="Sekine M."/>
            <person name="Obayashi M."/>
            <person name="Nishi T."/>
            <person name="Shibahara T."/>
            <person name="Tanaka T."/>
            <person name="Ishii S."/>
            <person name="Yamamoto J."/>
            <person name="Saito K."/>
            <person name="Kawai Y."/>
            <person name="Isono Y."/>
            <person name="Nakamura Y."/>
            <person name="Nagahari K."/>
            <person name="Murakami K."/>
            <person name="Yasuda T."/>
            <person name="Iwayanagi T."/>
            <person name="Wagatsuma M."/>
            <person name="Shiratori A."/>
            <person name="Sudo H."/>
            <person name="Hosoiri T."/>
            <person name="Kaku Y."/>
            <person name="Kodaira H."/>
            <person name="Kondo H."/>
            <person name="Sugawara M."/>
            <person name="Takahashi M."/>
            <person name="Kanda K."/>
            <person name="Yokoi T."/>
            <person name="Furuya T."/>
            <person name="Kikkawa E."/>
            <person name="Omura Y."/>
            <person name="Abe K."/>
            <person name="Kamihara K."/>
            <person name="Katsuta N."/>
            <person name="Sato K."/>
            <person name="Tanikawa M."/>
            <person name="Yamazaki M."/>
            <person name="Ninomiya K."/>
            <person name="Ishibashi T."/>
            <person name="Yamashita H."/>
            <person name="Murakawa K."/>
            <person name="Fujimori K."/>
            <person name="Tanai H."/>
            <person name="Kimata M."/>
            <person name="Watanabe M."/>
            <person name="Hiraoka S."/>
            <person name="Chiba Y."/>
            <person name="Ishida S."/>
            <person name="Ono Y."/>
            <person name="Takiguchi S."/>
            <person name="Watanabe S."/>
            <person name="Yosida M."/>
            <person name="Hotuta T."/>
            <person name="Kusano J."/>
            <person name="Kanehori K."/>
            <person name="Takahashi-Fujii A."/>
            <person name="Hara H."/>
            <person name="Tanase T.-O."/>
            <person name="Nomura Y."/>
            <person name="Togiya S."/>
            <person name="Komai F."/>
            <person name="Hara R."/>
            <person name="Takeuchi K."/>
            <person name="Arita M."/>
            <person name="Imose N."/>
            <person name="Musashino K."/>
            <person name="Yuuki H."/>
            <person name="Oshima A."/>
            <person name="Sasaki N."/>
            <person name="Aotsuka S."/>
            <person name="Yoshikawa Y."/>
            <person name="Matsunawa H."/>
            <person name="Ichihara T."/>
            <person name="Shiohata N."/>
            <person name="Sano S."/>
            <person name="Moriya S."/>
            <person name="Momiyama H."/>
            <person name="Satoh N."/>
            <person name="Takami S."/>
            <person name="Terashima Y."/>
            <person name="Suzuki O."/>
            <person name="Nakagawa S."/>
            <person name="Senoh A."/>
            <person name="Mizoguchi H."/>
            <person name="Goto Y."/>
            <person name="Shimizu F."/>
            <person name="Wakebe H."/>
            <person name="Hishigaki H."/>
            <person name="Watanabe T."/>
            <person name="Sugiyama A."/>
            <person name="Takemoto M."/>
            <person name="Kawakami B."/>
            <person name="Yamazaki M."/>
            <person name="Watanabe K."/>
            <person name="Kumagai A."/>
            <person name="Itakura S."/>
            <person name="Fukuzumi Y."/>
            <person name="Fujimori Y."/>
            <person name="Komiyama M."/>
            <person name="Tashiro H."/>
            <person name="Tanigami A."/>
            <person name="Fujiwara T."/>
            <person name="Ono T."/>
            <person name="Yamada K."/>
            <person name="Fujii Y."/>
            <person name="Ozaki K."/>
            <person name="Hirao M."/>
            <person name="Ohmori Y."/>
            <person name="Kawabata A."/>
            <person name="Hikiji T."/>
            <person name="Kobatake N."/>
            <person name="Inagaki H."/>
            <person name="Ikema Y."/>
            <person name="Okamoto S."/>
            <person name="Okitani R."/>
            <person name="Kawakami T."/>
            <person name="Noguchi S."/>
            <person name="Itoh T."/>
            <person name="Shigeta K."/>
            <person name="Senba T."/>
            <person name="Matsumura K."/>
            <person name="Nakajima Y."/>
            <person name="Mizuno T."/>
            <person name="Morinaga M."/>
            <person name="Sasaki M."/>
            <person name="Togashi T."/>
            <person name="Oyama M."/>
            <person name="Hata H."/>
            <person name="Watanabe M."/>
            <person name="Komatsu T."/>
            <person name="Mizushima-Sugano J."/>
            <person name="Satoh T."/>
            <person name="Shirai Y."/>
            <person name="Takahashi Y."/>
            <person name="Nakagawa K."/>
            <person name="Okumura K."/>
            <person name="Nagase T."/>
            <person name="Nomura N."/>
            <person name="Kikuchi H."/>
            <person name="Masuho Y."/>
            <person name="Yamashita R."/>
            <person name="Nakai K."/>
            <person name="Yada T."/>
            <person name="Nakamura Y."/>
            <person name="Ohara O."/>
            <person name="Isogai T."/>
            <person name="Sugano S."/>
        </authorList>
    </citation>
    <scope>NUCLEOTIDE SEQUENCE [LARGE SCALE MRNA] (ISOFORM 2)</scope>
    <scope>VARIANTS PRO-70; ILE-182; LYS-337 AND HIS-495</scope>
    <source>
        <tissue>Teratocarcinoma</tissue>
    </source>
</reference>
<reference key="2">
    <citation type="journal article" date="2004" name="Nature">
        <title>The DNA sequence and biology of human chromosome 19.</title>
        <authorList>
            <person name="Grimwood J."/>
            <person name="Gordon L.A."/>
            <person name="Olsen A.S."/>
            <person name="Terry A."/>
            <person name="Schmutz J."/>
            <person name="Lamerdin J.E."/>
            <person name="Hellsten U."/>
            <person name="Goodstein D."/>
            <person name="Couronne O."/>
            <person name="Tran-Gyamfi M."/>
            <person name="Aerts A."/>
            <person name="Altherr M."/>
            <person name="Ashworth L."/>
            <person name="Bajorek E."/>
            <person name="Black S."/>
            <person name="Branscomb E."/>
            <person name="Caenepeel S."/>
            <person name="Carrano A.V."/>
            <person name="Caoile C."/>
            <person name="Chan Y.M."/>
            <person name="Christensen M."/>
            <person name="Cleland C.A."/>
            <person name="Copeland A."/>
            <person name="Dalin E."/>
            <person name="Dehal P."/>
            <person name="Denys M."/>
            <person name="Detter J.C."/>
            <person name="Escobar J."/>
            <person name="Flowers D."/>
            <person name="Fotopulos D."/>
            <person name="Garcia C."/>
            <person name="Georgescu A.M."/>
            <person name="Glavina T."/>
            <person name="Gomez M."/>
            <person name="Gonzales E."/>
            <person name="Groza M."/>
            <person name="Hammon N."/>
            <person name="Hawkins T."/>
            <person name="Haydu L."/>
            <person name="Ho I."/>
            <person name="Huang W."/>
            <person name="Israni S."/>
            <person name="Jett J."/>
            <person name="Kadner K."/>
            <person name="Kimball H."/>
            <person name="Kobayashi A."/>
            <person name="Larionov V."/>
            <person name="Leem S.-H."/>
            <person name="Lopez F."/>
            <person name="Lou Y."/>
            <person name="Lowry S."/>
            <person name="Malfatti S."/>
            <person name="Martinez D."/>
            <person name="McCready P.M."/>
            <person name="Medina C."/>
            <person name="Morgan J."/>
            <person name="Nelson K."/>
            <person name="Nolan M."/>
            <person name="Ovcharenko I."/>
            <person name="Pitluck S."/>
            <person name="Pollard M."/>
            <person name="Popkie A.P."/>
            <person name="Predki P."/>
            <person name="Quan G."/>
            <person name="Ramirez L."/>
            <person name="Rash S."/>
            <person name="Retterer J."/>
            <person name="Rodriguez A."/>
            <person name="Rogers S."/>
            <person name="Salamov A."/>
            <person name="Salazar A."/>
            <person name="She X."/>
            <person name="Smith D."/>
            <person name="Slezak T."/>
            <person name="Solovyev V."/>
            <person name="Thayer N."/>
            <person name="Tice H."/>
            <person name="Tsai M."/>
            <person name="Ustaszewska A."/>
            <person name="Vo N."/>
            <person name="Wagner M."/>
            <person name="Wheeler J."/>
            <person name="Wu K."/>
            <person name="Xie G."/>
            <person name="Yang J."/>
            <person name="Dubchak I."/>
            <person name="Furey T.S."/>
            <person name="DeJong P."/>
            <person name="Dickson M."/>
            <person name="Gordon D."/>
            <person name="Eichler E.E."/>
            <person name="Pennacchio L.A."/>
            <person name="Richardson P."/>
            <person name="Stubbs L."/>
            <person name="Rokhsar D.S."/>
            <person name="Myers R.M."/>
            <person name="Rubin E.M."/>
            <person name="Lucas S.M."/>
        </authorList>
    </citation>
    <scope>NUCLEOTIDE SEQUENCE [LARGE SCALE GENOMIC DNA]</scope>
</reference>
<reference key="3">
    <citation type="journal article" date="2004" name="Genome Res.">
        <title>The status, quality, and expansion of the NIH full-length cDNA project: the Mammalian Gene Collection (MGC).</title>
        <authorList>
            <consortium name="The MGC Project Team"/>
        </authorList>
    </citation>
    <scope>NUCLEOTIDE SEQUENCE [LARGE SCALE MRNA] (ISOFORMS 1 AND 2)</scope>
    <scope>VARIANTS PRO-70; ILE-182 AND LYS-337</scope>
    <source>
        <tissue>Lymphoma</tissue>
        <tissue>Testis</tissue>
    </source>
</reference>
<reference key="4">
    <citation type="journal article" date="2017" name="Nat. Struct. Mol. Biol.">
        <title>Site-specific mapping of the human SUMO proteome reveals co-modification with phosphorylation.</title>
        <authorList>
            <person name="Hendriks I.A."/>
            <person name="Lyon D."/>
            <person name="Young C."/>
            <person name="Jensen L.J."/>
            <person name="Vertegaal A.C."/>
            <person name="Nielsen M.L."/>
        </authorList>
    </citation>
    <scope>SUMOYLATION [LARGE SCALE ANALYSIS] AT LYS-271</scope>
    <scope>IDENTIFICATION BY MASS SPECTROMETRY [LARGE SCALE ANALYSIS]</scope>
</reference>
<name>ZN701_HUMAN</name>